<name>CYAY_BURCM</name>
<feature type="chain" id="PRO_1000010914" description="Iron-sulfur cluster assembly protein CyaY">
    <location>
        <begin position="1"/>
        <end position="108"/>
    </location>
</feature>
<accession>Q0BJ08</accession>
<keyword id="KW-0408">Iron</keyword>
<keyword id="KW-0479">Metal-binding</keyword>
<gene>
    <name evidence="1" type="primary">cyaY</name>
    <name type="ordered locus">Bamb_0305</name>
</gene>
<dbReference type="EMBL" id="CP000440">
    <property type="protein sequence ID" value="ABI85865.1"/>
    <property type="molecule type" value="Genomic_DNA"/>
</dbReference>
<dbReference type="RefSeq" id="WP_006758798.1">
    <property type="nucleotide sequence ID" value="NZ_CP009798.1"/>
</dbReference>
<dbReference type="SMR" id="Q0BJ08"/>
<dbReference type="GeneID" id="93084280"/>
<dbReference type="KEGG" id="bam:Bamb_0305"/>
<dbReference type="PATRIC" id="fig|339670.21.peg.1315"/>
<dbReference type="eggNOG" id="COG1965">
    <property type="taxonomic scope" value="Bacteria"/>
</dbReference>
<dbReference type="Proteomes" id="UP000000662">
    <property type="component" value="Chromosome 1"/>
</dbReference>
<dbReference type="GO" id="GO:0005829">
    <property type="term" value="C:cytosol"/>
    <property type="evidence" value="ECO:0007669"/>
    <property type="project" value="TreeGrafter"/>
</dbReference>
<dbReference type="GO" id="GO:0008199">
    <property type="term" value="F:ferric iron binding"/>
    <property type="evidence" value="ECO:0007669"/>
    <property type="project" value="InterPro"/>
</dbReference>
<dbReference type="GO" id="GO:0008198">
    <property type="term" value="F:ferrous iron binding"/>
    <property type="evidence" value="ECO:0007669"/>
    <property type="project" value="TreeGrafter"/>
</dbReference>
<dbReference type="GO" id="GO:0016226">
    <property type="term" value="P:iron-sulfur cluster assembly"/>
    <property type="evidence" value="ECO:0007669"/>
    <property type="project" value="UniProtKB-UniRule"/>
</dbReference>
<dbReference type="CDD" id="cd00503">
    <property type="entry name" value="Frataxin"/>
    <property type="match status" value="1"/>
</dbReference>
<dbReference type="Gene3D" id="3.30.920.10">
    <property type="entry name" value="Frataxin/CyaY"/>
    <property type="match status" value="1"/>
</dbReference>
<dbReference type="HAMAP" id="MF_00142">
    <property type="entry name" value="CyaY"/>
    <property type="match status" value="1"/>
</dbReference>
<dbReference type="InterPro" id="IPR047584">
    <property type="entry name" value="CyaY"/>
</dbReference>
<dbReference type="InterPro" id="IPR002908">
    <property type="entry name" value="Frataxin/CyaY"/>
</dbReference>
<dbReference type="InterPro" id="IPR036524">
    <property type="entry name" value="Frataxin/CyaY_sf"/>
</dbReference>
<dbReference type="InterPro" id="IPR020895">
    <property type="entry name" value="Frataxin_CS"/>
</dbReference>
<dbReference type="NCBIfam" id="TIGR03421">
    <property type="entry name" value="FeS_CyaY"/>
    <property type="match status" value="1"/>
</dbReference>
<dbReference type="PANTHER" id="PTHR16821">
    <property type="entry name" value="FRATAXIN"/>
    <property type="match status" value="1"/>
</dbReference>
<dbReference type="PANTHER" id="PTHR16821:SF2">
    <property type="entry name" value="FRATAXIN, MITOCHONDRIAL"/>
    <property type="match status" value="1"/>
</dbReference>
<dbReference type="Pfam" id="PF01491">
    <property type="entry name" value="Frataxin_Cyay"/>
    <property type="match status" value="1"/>
</dbReference>
<dbReference type="SMART" id="SM01219">
    <property type="entry name" value="Frataxin_Cyay"/>
    <property type="match status" value="1"/>
</dbReference>
<dbReference type="SUPFAM" id="SSF55387">
    <property type="entry name" value="Frataxin/Nqo15-like"/>
    <property type="match status" value="1"/>
</dbReference>
<dbReference type="PROSITE" id="PS01344">
    <property type="entry name" value="FRATAXIN_1"/>
    <property type="match status" value="1"/>
</dbReference>
<dbReference type="PROSITE" id="PS50810">
    <property type="entry name" value="FRATAXIN_2"/>
    <property type="match status" value="1"/>
</dbReference>
<sequence length="108" mass="11998">MSDTEYLARAEAVLASVERTVDAANDGDHDIDLERNGSVLTLTFENGSKIIINLQPPMKELWIAAKAGGFHYRFVDGEWRDTRTGTEFFSALTDYATQQAGLPITFRA</sequence>
<evidence type="ECO:0000255" key="1">
    <source>
        <dbReference type="HAMAP-Rule" id="MF_00142"/>
    </source>
</evidence>
<comment type="function">
    <text evidence="1">Involved in iron-sulfur (Fe-S) cluster assembly. May act as a regulator of Fe-S biogenesis.</text>
</comment>
<comment type="similarity">
    <text evidence="1">Belongs to the frataxin family.</text>
</comment>
<proteinExistence type="inferred from homology"/>
<reference key="1">
    <citation type="submission" date="2006-08" db="EMBL/GenBank/DDBJ databases">
        <title>Complete sequence of chromosome 1 of Burkholderia cepacia AMMD.</title>
        <authorList>
            <person name="Copeland A."/>
            <person name="Lucas S."/>
            <person name="Lapidus A."/>
            <person name="Barry K."/>
            <person name="Detter J.C."/>
            <person name="Glavina del Rio T."/>
            <person name="Hammon N."/>
            <person name="Israni S."/>
            <person name="Pitluck S."/>
            <person name="Bruce D."/>
            <person name="Chain P."/>
            <person name="Malfatti S."/>
            <person name="Shin M."/>
            <person name="Vergez L."/>
            <person name="Schmutz J."/>
            <person name="Larimer F."/>
            <person name="Land M."/>
            <person name="Hauser L."/>
            <person name="Kyrpides N."/>
            <person name="Kim E."/>
            <person name="Parke J."/>
            <person name="Coenye T."/>
            <person name="Konstantinidis K."/>
            <person name="Ramette A."/>
            <person name="Tiedje J."/>
            <person name="Richardson P."/>
        </authorList>
    </citation>
    <scope>NUCLEOTIDE SEQUENCE [LARGE SCALE GENOMIC DNA]</scope>
    <source>
        <strain>ATCC BAA-244 / DSM 16087 / CCUG 44356 / LMG 19182 / AMMD</strain>
    </source>
</reference>
<organism>
    <name type="scientific">Burkholderia ambifaria (strain ATCC BAA-244 / DSM 16087 / CCUG 44356 / LMG 19182 / AMMD)</name>
    <name type="common">Burkholderia cepacia (strain AMMD)</name>
    <dbReference type="NCBI Taxonomy" id="339670"/>
    <lineage>
        <taxon>Bacteria</taxon>
        <taxon>Pseudomonadati</taxon>
        <taxon>Pseudomonadota</taxon>
        <taxon>Betaproteobacteria</taxon>
        <taxon>Burkholderiales</taxon>
        <taxon>Burkholderiaceae</taxon>
        <taxon>Burkholderia</taxon>
        <taxon>Burkholderia cepacia complex</taxon>
    </lineage>
</organism>
<protein>
    <recommendedName>
        <fullName evidence="1">Iron-sulfur cluster assembly protein CyaY</fullName>
    </recommendedName>
</protein>